<accession>A9NDV9</accession>
<feature type="chain" id="PRO_1000076267" description="Histidine--tRNA ligase">
    <location>
        <begin position="1"/>
        <end position="421"/>
    </location>
</feature>
<evidence type="ECO:0000255" key="1">
    <source>
        <dbReference type="HAMAP-Rule" id="MF_00127"/>
    </source>
</evidence>
<comment type="catalytic activity">
    <reaction evidence="1">
        <text>tRNA(His) + L-histidine + ATP = L-histidyl-tRNA(His) + AMP + diphosphate + H(+)</text>
        <dbReference type="Rhea" id="RHEA:17313"/>
        <dbReference type="Rhea" id="RHEA-COMP:9665"/>
        <dbReference type="Rhea" id="RHEA-COMP:9689"/>
        <dbReference type="ChEBI" id="CHEBI:15378"/>
        <dbReference type="ChEBI" id="CHEBI:30616"/>
        <dbReference type="ChEBI" id="CHEBI:33019"/>
        <dbReference type="ChEBI" id="CHEBI:57595"/>
        <dbReference type="ChEBI" id="CHEBI:78442"/>
        <dbReference type="ChEBI" id="CHEBI:78527"/>
        <dbReference type="ChEBI" id="CHEBI:456215"/>
        <dbReference type="EC" id="6.1.1.21"/>
    </reaction>
</comment>
<comment type="subunit">
    <text evidence="1">Homodimer.</text>
</comment>
<comment type="subcellular location">
    <subcellularLocation>
        <location evidence="1">Cytoplasm</location>
    </subcellularLocation>
</comment>
<comment type="similarity">
    <text evidence="1">Belongs to the class-II aminoacyl-tRNA synthetase family.</text>
</comment>
<organism>
    <name type="scientific">Coxiella burnetii (strain RSA 331 / Henzerling II)</name>
    <dbReference type="NCBI Taxonomy" id="360115"/>
    <lineage>
        <taxon>Bacteria</taxon>
        <taxon>Pseudomonadati</taxon>
        <taxon>Pseudomonadota</taxon>
        <taxon>Gammaproteobacteria</taxon>
        <taxon>Legionellales</taxon>
        <taxon>Coxiellaceae</taxon>
        <taxon>Coxiella</taxon>
    </lineage>
</organism>
<reference key="1">
    <citation type="submission" date="2007-11" db="EMBL/GenBank/DDBJ databases">
        <title>Genome sequencing of phylogenetically and phenotypically diverse Coxiella burnetii isolates.</title>
        <authorList>
            <person name="Seshadri R."/>
            <person name="Samuel J.E."/>
        </authorList>
    </citation>
    <scope>NUCLEOTIDE SEQUENCE [LARGE SCALE GENOMIC DNA]</scope>
    <source>
        <strain>RSA 331 / Henzerling II</strain>
    </source>
</reference>
<dbReference type="EC" id="6.1.1.21" evidence="1"/>
<dbReference type="EMBL" id="CP000890">
    <property type="protein sequence ID" value="ABX78550.1"/>
    <property type="molecule type" value="Genomic_DNA"/>
</dbReference>
<dbReference type="RefSeq" id="WP_010958101.1">
    <property type="nucleotide sequence ID" value="NC_010117.1"/>
</dbReference>
<dbReference type="SMR" id="A9NDV9"/>
<dbReference type="KEGG" id="cbs:COXBURSA331_A1393"/>
<dbReference type="HOGENOM" id="CLU_025113_1_1_6"/>
<dbReference type="GO" id="GO:0005737">
    <property type="term" value="C:cytoplasm"/>
    <property type="evidence" value="ECO:0007669"/>
    <property type="project" value="UniProtKB-SubCell"/>
</dbReference>
<dbReference type="GO" id="GO:0005524">
    <property type="term" value="F:ATP binding"/>
    <property type="evidence" value="ECO:0007669"/>
    <property type="project" value="UniProtKB-UniRule"/>
</dbReference>
<dbReference type="GO" id="GO:0004821">
    <property type="term" value="F:histidine-tRNA ligase activity"/>
    <property type="evidence" value="ECO:0007669"/>
    <property type="project" value="UniProtKB-UniRule"/>
</dbReference>
<dbReference type="GO" id="GO:0006427">
    <property type="term" value="P:histidyl-tRNA aminoacylation"/>
    <property type="evidence" value="ECO:0007669"/>
    <property type="project" value="UniProtKB-UniRule"/>
</dbReference>
<dbReference type="CDD" id="cd00773">
    <property type="entry name" value="HisRS-like_core"/>
    <property type="match status" value="1"/>
</dbReference>
<dbReference type="CDD" id="cd00859">
    <property type="entry name" value="HisRS_anticodon"/>
    <property type="match status" value="1"/>
</dbReference>
<dbReference type="FunFam" id="3.30.930.10:FF:000005">
    <property type="entry name" value="Histidine--tRNA ligase"/>
    <property type="match status" value="1"/>
</dbReference>
<dbReference type="Gene3D" id="3.40.50.800">
    <property type="entry name" value="Anticodon-binding domain"/>
    <property type="match status" value="1"/>
</dbReference>
<dbReference type="Gene3D" id="3.30.930.10">
    <property type="entry name" value="Bira Bifunctional Protein, Domain 2"/>
    <property type="match status" value="1"/>
</dbReference>
<dbReference type="HAMAP" id="MF_00127">
    <property type="entry name" value="His_tRNA_synth"/>
    <property type="match status" value="1"/>
</dbReference>
<dbReference type="InterPro" id="IPR006195">
    <property type="entry name" value="aa-tRNA-synth_II"/>
</dbReference>
<dbReference type="InterPro" id="IPR045864">
    <property type="entry name" value="aa-tRNA-synth_II/BPL/LPL"/>
</dbReference>
<dbReference type="InterPro" id="IPR004154">
    <property type="entry name" value="Anticodon-bd"/>
</dbReference>
<dbReference type="InterPro" id="IPR036621">
    <property type="entry name" value="Anticodon-bd_dom_sf"/>
</dbReference>
<dbReference type="InterPro" id="IPR015807">
    <property type="entry name" value="His-tRNA-ligase"/>
</dbReference>
<dbReference type="InterPro" id="IPR041715">
    <property type="entry name" value="HisRS-like_core"/>
</dbReference>
<dbReference type="InterPro" id="IPR004516">
    <property type="entry name" value="HisRS/HisZ"/>
</dbReference>
<dbReference type="InterPro" id="IPR033656">
    <property type="entry name" value="HisRS_anticodon"/>
</dbReference>
<dbReference type="NCBIfam" id="TIGR00442">
    <property type="entry name" value="hisS"/>
    <property type="match status" value="1"/>
</dbReference>
<dbReference type="PANTHER" id="PTHR43707:SF1">
    <property type="entry name" value="HISTIDINE--TRNA LIGASE, MITOCHONDRIAL-RELATED"/>
    <property type="match status" value="1"/>
</dbReference>
<dbReference type="PANTHER" id="PTHR43707">
    <property type="entry name" value="HISTIDYL-TRNA SYNTHETASE"/>
    <property type="match status" value="1"/>
</dbReference>
<dbReference type="Pfam" id="PF03129">
    <property type="entry name" value="HGTP_anticodon"/>
    <property type="match status" value="1"/>
</dbReference>
<dbReference type="Pfam" id="PF13393">
    <property type="entry name" value="tRNA-synt_His"/>
    <property type="match status" value="1"/>
</dbReference>
<dbReference type="PIRSF" id="PIRSF001549">
    <property type="entry name" value="His-tRNA_synth"/>
    <property type="match status" value="1"/>
</dbReference>
<dbReference type="SUPFAM" id="SSF52954">
    <property type="entry name" value="Class II aaRS ABD-related"/>
    <property type="match status" value="1"/>
</dbReference>
<dbReference type="SUPFAM" id="SSF55681">
    <property type="entry name" value="Class II aaRS and biotin synthetases"/>
    <property type="match status" value="1"/>
</dbReference>
<dbReference type="PROSITE" id="PS50862">
    <property type="entry name" value="AA_TRNA_LIGASE_II"/>
    <property type="match status" value="1"/>
</dbReference>
<gene>
    <name evidence="1" type="primary">hisS</name>
    <name type="ordered locus">COXBURSA331_A1393</name>
</gene>
<sequence>MTKSIQAIRGMSDTLPEEIPYWSFLENACRSVVSAYHYREIRFPVVEQTALFKRTIGEATDIVEKEMYTFTDRNGDSLTLRPEGTAGCVRAGIQNGLFYNQIQRLWYLGPMFRHERPQKGRYRQFYQLGVETYGMAGAPIEAELIFMCLRLWKALGLESCIHLELNTLGTLDSRNAYRQALVTYLQSREKELDEDSRRRLHTNPLRILDSKNPDLQPLLAEAPKLIDYLDETSRRHFDQLRSLLDQAEVPFIVNPTLVRGLDYYTHTVFEWVTDQLGAQGTVCAGGRYDNLVELLGGKSTPAAGFAAGLERLVLLLRGVQECLDKIDIYVVIAGEAVIQEGLLMTEQLRNVLPEWVIEADLSGSSLKSQFKRADKSGAKWALVIGEEEIKTNTVTLKHLRETVPQKSLTRDTLIPYLKSEG</sequence>
<keyword id="KW-0030">Aminoacyl-tRNA synthetase</keyword>
<keyword id="KW-0067">ATP-binding</keyword>
<keyword id="KW-0963">Cytoplasm</keyword>
<keyword id="KW-0436">Ligase</keyword>
<keyword id="KW-0547">Nucleotide-binding</keyword>
<keyword id="KW-0648">Protein biosynthesis</keyword>
<name>SYH_COXBR</name>
<protein>
    <recommendedName>
        <fullName evidence="1">Histidine--tRNA ligase</fullName>
        <ecNumber evidence="1">6.1.1.21</ecNumber>
    </recommendedName>
    <alternativeName>
        <fullName evidence="1">Histidyl-tRNA synthetase</fullName>
        <shortName evidence="1">HisRS</shortName>
    </alternativeName>
</protein>
<proteinExistence type="inferred from homology"/>